<feature type="chain" id="PRO_0000337811" description="Probable phosphoglucosamine mutase">
    <location>
        <begin position="1"/>
        <end position="433"/>
    </location>
</feature>
<feature type="active site" description="Phosphoserine intermediate" evidence="1">
    <location>
        <position position="91"/>
    </location>
</feature>
<feature type="binding site" description="via phosphate group" evidence="1">
    <location>
        <position position="91"/>
    </location>
    <ligand>
        <name>Mg(2+)</name>
        <dbReference type="ChEBI" id="CHEBI:18420"/>
    </ligand>
</feature>
<feature type="binding site" evidence="1">
    <location>
        <position position="229"/>
    </location>
    <ligand>
        <name>Mg(2+)</name>
        <dbReference type="ChEBI" id="CHEBI:18420"/>
    </ligand>
</feature>
<feature type="binding site" evidence="1">
    <location>
        <position position="231"/>
    </location>
    <ligand>
        <name>Mg(2+)</name>
        <dbReference type="ChEBI" id="CHEBI:18420"/>
    </ligand>
</feature>
<feature type="binding site" evidence="1">
    <location>
        <position position="233"/>
    </location>
    <ligand>
        <name>Mg(2+)</name>
        <dbReference type="ChEBI" id="CHEBI:18420"/>
    </ligand>
</feature>
<feature type="modified residue" description="Phosphoserine" evidence="1">
    <location>
        <position position="91"/>
    </location>
</feature>
<gene>
    <name evidence="1" type="primary">glmM</name>
    <name type="ordered locus">Mbur_2342</name>
</gene>
<keyword id="KW-0413">Isomerase</keyword>
<keyword id="KW-0460">Magnesium</keyword>
<keyword id="KW-0479">Metal-binding</keyword>
<keyword id="KW-0597">Phosphoprotein</keyword>
<name>GLMM_METBU</name>
<comment type="function">
    <text evidence="1">Catalyzes the conversion of glucosamine-6-phosphate to glucosamine-1-phosphate.</text>
</comment>
<comment type="catalytic activity">
    <reaction evidence="1">
        <text>alpha-D-glucosamine 1-phosphate = D-glucosamine 6-phosphate</text>
        <dbReference type="Rhea" id="RHEA:23424"/>
        <dbReference type="ChEBI" id="CHEBI:58516"/>
        <dbReference type="ChEBI" id="CHEBI:58725"/>
        <dbReference type="EC" id="5.4.2.10"/>
    </reaction>
</comment>
<comment type="cofactor">
    <cofactor evidence="1">
        <name>Mg(2+)</name>
        <dbReference type="ChEBI" id="CHEBI:18420"/>
    </cofactor>
    <text evidence="1">Binds 1 Mg(2+) ion per subunit.</text>
</comment>
<comment type="PTM">
    <text evidence="1">Activated by phosphorylation.</text>
</comment>
<comment type="similarity">
    <text evidence="1">Belongs to the phosphohexose mutase family.</text>
</comment>
<sequence>MKLFGSSGIRGITNKEVTTDLALKVGLALGKTKRSAVVGRDPRIAGEMIEHAIISGLLSAGCDVVRIGMVSTPTLAYATKDYDCGVMITASHNPAEYVGIKLWNPDGMAFDSSQQEEIEECIEKEDFEPVNWDQIGNVSEDANAIRQHTNMILQNVKRSSKRVIIDCGCGAGSTITPYVLRKMGCEVITLNSQPDGYFPARNPEPNDTNLTLLKIAVKEFGADIGIAQDGDADRMMAIDEKGEFITGDEMLALFARHECDEGAIIVVPVDTSMMVDDALPGSTVIRTRVGDVYVAEEIKRCNADIGGEPSGSWIFPKISYCPDGIFASAKIMELIENRTLSELKKELPHYPTYRGTVKCDNERKAHVMEVVHSKLEKCGKISDIDGIRVEMDNGWVLVRPSGTEPKIRITAEAREGADRLFSMAENIIKEALN</sequence>
<dbReference type="EC" id="5.4.2.10" evidence="1"/>
<dbReference type="EMBL" id="CP000300">
    <property type="protein sequence ID" value="ABE53196.1"/>
    <property type="molecule type" value="Genomic_DNA"/>
</dbReference>
<dbReference type="RefSeq" id="WP_011500331.1">
    <property type="nucleotide sequence ID" value="NC_007955.1"/>
</dbReference>
<dbReference type="SMR" id="Q12TN0"/>
<dbReference type="STRING" id="259564.Mbur_2342"/>
<dbReference type="GeneID" id="3998923"/>
<dbReference type="KEGG" id="mbu:Mbur_2342"/>
<dbReference type="HOGENOM" id="CLU_016950_7_1_2"/>
<dbReference type="OrthoDB" id="10363at2157"/>
<dbReference type="Proteomes" id="UP000001979">
    <property type="component" value="Chromosome"/>
</dbReference>
<dbReference type="GO" id="GO:0000287">
    <property type="term" value="F:magnesium ion binding"/>
    <property type="evidence" value="ECO:0007669"/>
    <property type="project" value="UniProtKB-UniRule"/>
</dbReference>
<dbReference type="GO" id="GO:0008966">
    <property type="term" value="F:phosphoglucosamine mutase activity"/>
    <property type="evidence" value="ECO:0007669"/>
    <property type="project" value="UniProtKB-UniRule"/>
</dbReference>
<dbReference type="GO" id="GO:0005975">
    <property type="term" value="P:carbohydrate metabolic process"/>
    <property type="evidence" value="ECO:0007669"/>
    <property type="project" value="InterPro"/>
</dbReference>
<dbReference type="CDD" id="cd03087">
    <property type="entry name" value="PGM_like1"/>
    <property type="match status" value="1"/>
</dbReference>
<dbReference type="FunFam" id="3.40.120.10:FF:000001">
    <property type="entry name" value="Phosphoglucosamine mutase"/>
    <property type="match status" value="1"/>
</dbReference>
<dbReference type="FunFam" id="3.40.120.10:FF:000003">
    <property type="entry name" value="Phosphoglucosamine mutase"/>
    <property type="match status" value="1"/>
</dbReference>
<dbReference type="FunFam" id="3.30.310.50:FF:000009">
    <property type="entry name" value="Probable phosphoglucosamine mutase"/>
    <property type="match status" value="1"/>
</dbReference>
<dbReference type="Gene3D" id="3.40.120.10">
    <property type="entry name" value="Alpha-D-Glucose-1,6-Bisphosphate, subunit A, domain 3"/>
    <property type="match status" value="3"/>
</dbReference>
<dbReference type="Gene3D" id="3.30.310.50">
    <property type="entry name" value="Alpha-D-phosphohexomutase, C-terminal domain"/>
    <property type="match status" value="1"/>
</dbReference>
<dbReference type="HAMAP" id="MF_01554_A">
    <property type="entry name" value="GlmM_A"/>
    <property type="match status" value="1"/>
</dbReference>
<dbReference type="InterPro" id="IPR005844">
    <property type="entry name" value="A-D-PHexomutase_a/b/a-I"/>
</dbReference>
<dbReference type="InterPro" id="IPR016055">
    <property type="entry name" value="A-D-PHexomutase_a/b/a-I/II/III"/>
</dbReference>
<dbReference type="InterPro" id="IPR005845">
    <property type="entry name" value="A-D-PHexomutase_a/b/a-II"/>
</dbReference>
<dbReference type="InterPro" id="IPR005846">
    <property type="entry name" value="A-D-PHexomutase_a/b/a-III"/>
</dbReference>
<dbReference type="InterPro" id="IPR005843">
    <property type="entry name" value="A-D-PHexomutase_C"/>
</dbReference>
<dbReference type="InterPro" id="IPR036900">
    <property type="entry name" value="A-D-PHexomutase_C_sf"/>
</dbReference>
<dbReference type="InterPro" id="IPR016066">
    <property type="entry name" value="A-D-PHexomutase_CS"/>
</dbReference>
<dbReference type="InterPro" id="IPR005841">
    <property type="entry name" value="Alpha-D-phosphohexomutase_SF"/>
</dbReference>
<dbReference type="InterPro" id="IPR023666">
    <property type="entry name" value="GlmM_arc"/>
</dbReference>
<dbReference type="InterPro" id="IPR024086">
    <property type="entry name" value="GlmM_arc-type"/>
</dbReference>
<dbReference type="NCBIfam" id="TIGR03990">
    <property type="entry name" value="Arch_GlmM"/>
    <property type="match status" value="1"/>
</dbReference>
<dbReference type="PANTHER" id="PTHR43771">
    <property type="entry name" value="PHOSPHOMANNOMUTASE"/>
    <property type="match status" value="1"/>
</dbReference>
<dbReference type="PANTHER" id="PTHR43771:SF1">
    <property type="entry name" value="PHOSPHOMANNOMUTASE"/>
    <property type="match status" value="1"/>
</dbReference>
<dbReference type="Pfam" id="PF02878">
    <property type="entry name" value="PGM_PMM_I"/>
    <property type="match status" value="1"/>
</dbReference>
<dbReference type="Pfam" id="PF02879">
    <property type="entry name" value="PGM_PMM_II"/>
    <property type="match status" value="1"/>
</dbReference>
<dbReference type="Pfam" id="PF02880">
    <property type="entry name" value="PGM_PMM_III"/>
    <property type="match status" value="1"/>
</dbReference>
<dbReference type="Pfam" id="PF00408">
    <property type="entry name" value="PGM_PMM_IV"/>
    <property type="match status" value="1"/>
</dbReference>
<dbReference type="PRINTS" id="PR00509">
    <property type="entry name" value="PGMPMM"/>
</dbReference>
<dbReference type="SUPFAM" id="SSF55957">
    <property type="entry name" value="Phosphoglucomutase, C-terminal domain"/>
    <property type="match status" value="1"/>
</dbReference>
<dbReference type="SUPFAM" id="SSF53738">
    <property type="entry name" value="Phosphoglucomutase, first 3 domains"/>
    <property type="match status" value="3"/>
</dbReference>
<dbReference type="PROSITE" id="PS00710">
    <property type="entry name" value="PGM_PMM"/>
    <property type="match status" value="1"/>
</dbReference>
<evidence type="ECO:0000255" key="1">
    <source>
        <dbReference type="HAMAP-Rule" id="MF_01554"/>
    </source>
</evidence>
<protein>
    <recommendedName>
        <fullName evidence="1">Probable phosphoglucosamine mutase</fullName>
        <ecNumber evidence="1">5.4.2.10</ecNumber>
    </recommendedName>
</protein>
<accession>Q12TN0</accession>
<reference key="1">
    <citation type="journal article" date="2009" name="ISME J.">
        <title>The genome sequence of the psychrophilic archaeon, Methanococcoides burtonii: the role of genome evolution in cold adaptation.</title>
        <authorList>
            <person name="Allen M.A."/>
            <person name="Lauro F.M."/>
            <person name="Williams T.J."/>
            <person name="Burg D."/>
            <person name="Siddiqui K.S."/>
            <person name="De Francisci D."/>
            <person name="Chong K.W."/>
            <person name="Pilak O."/>
            <person name="Chew H.H."/>
            <person name="De Maere M.Z."/>
            <person name="Ting L."/>
            <person name="Katrib M."/>
            <person name="Ng C."/>
            <person name="Sowers K.R."/>
            <person name="Galperin M.Y."/>
            <person name="Anderson I.J."/>
            <person name="Ivanova N."/>
            <person name="Dalin E."/>
            <person name="Martinez M."/>
            <person name="Lapidus A."/>
            <person name="Hauser L."/>
            <person name="Land M."/>
            <person name="Thomas T."/>
            <person name="Cavicchioli R."/>
        </authorList>
    </citation>
    <scope>NUCLEOTIDE SEQUENCE [LARGE SCALE GENOMIC DNA]</scope>
    <source>
        <strain>DSM 6242 / NBRC 107633 / OCM 468 / ACE-M</strain>
    </source>
</reference>
<organism>
    <name type="scientific">Methanococcoides burtonii (strain DSM 6242 / NBRC 107633 / OCM 468 / ACE-M)</name>
    <dbReference type="NCBI Taxonomy" id="259564"/>
    <lineage>
        <taxon>Archaea</taxon>
        <taxon>Methanobacteriati</taxon>
        <taxon>Methanobacteriota</taxon>
        <taxon>Stenosarchaea group</taxon>
        <taxon>Methanomicrobia</taxon>
        <taxon>Methanosarcinales</taxon>
        <taxon>Methanosarcinaceae</taxon>
        <taxon>Methanococcoides</taxon>
    </lineage>
</organism>
<proteinExistence type="inferred from homology"/>